<organism>
    <name type="scientific">Francisella tularensis subsp. holarctica (strain OSU18)</name>
    <dbReference type="NCBI Taxonomy" id="393011"/>
    <lineage>
        <taxon>Bacteria</taxon>
        <taxon>Pseudomonadati</taxon>
        <taxon>Pseudomonadota</taxon>
        <taxon>Gammaproteobacteria</taxon>
        <taxon>Thiotrichales</taxon>
        <taxon>Francisellaceae</taxon>
        <taxon>Francisella</taxon>
    </lineage>
</organism>
<evidence type="ECO:0000255" key="1">
    <source>
        <dbReference type="HAMAP-Rule" id="MF_00821"/>
    </source>
</evidence>
<gene>
    <name evidence="1" type="primary">secB2</name>
    <name type="ordered locus">FTH_0293</name>
</gene>
<feature type="chain" id="PRO_0000318230" description="Protein-export protein SecB 2">
    <location>
        <begin position="1"/>
        <end position="147"/>
    </location>
</feature>
<protein>
    <recommendedName>
        <fullName evidence="1">Protein-export protein SecB 2</fullName>
    </recommendedName>
</protein>
<reference key="1">
    <citation type="journal article" date="2006" name="J. Bacteriol.">
        <title>Chromosome rearrangement and diversification of Francisella tularensis revealed by the type B (OSU18) genome sequence.</title>
        <authorList>
            <person name="Petrosino J.F."/>
            <person name="Xiang Q."/>
            <person name="Karpathy S.E."/>
            <person name="Jiang H."/>
            <person name="Yerrapragada S."/>
            <person name="Liu Y."/>
            <person name="Gioia J."/>
            <person name="Hemphill L."/>
            <person name="Gonzalez A."/>
            <person name="Raghavan T.M."/>
            <person name="Uzman A."/>
            <person name="Fox G.E."/>
            <person name="Highlander S."/>
            <person name="Reichard M."/>
            <person name="Morton R.J."/>
            <person name="Clinkenbeard K.D."/>
            <person name="Weinstock G.M."/>
        </authorList>
    </citation>
    <scope>NUCLEOTIDE SEQUENCE [LARGE SCALE GENOMIC DNA]</scope>
    <source>
        <strain>OSU18</strain>
    </source>
</reference>
<comment type="function">
    <text evidence="1">One of the proteins required for the normal export of preproteins out of the cell cytoplasm. It is a molecular chaperone that binds to a subset of precursor proteins, maintaining them in a translocation-competent state. It also specifically binds to its receptor SecA.</text>
</comment>
<comment type="subunit">
    <text evidence="1">Homotetramer, a dimer of dimers. One homotetramer interacts with 1 SecA dimer.</text>
</comment>
<comment type="subcellular location">
    <subcellularLocation>
        <location evidence="1">Cytoplasm</location>
    </subcellularLocation>
</comment>
<comment type="similarity">
    <text evidence="1">Belongs to the SecB family.</text>
</comment>
<keyword id="KW-0143">Chaperone</keyword>
<keyword id="KW-0963">Cytoplasm</keyword>
<keyword id="KW-0653">Protein transport</keyword>
<keyword id="KW-0811">Translocation</keyword>
<keyword id="KW-0813">Transport</keyword>
<name>SECB2_FRATO</name>
<dbReference type="EMBL" id="CP000437">
    <property type="protein sequence ID" value="ABI82306.1"/>
    <property type="molecule type" value="Genomic_DNA"/>
</dbReference>
<dbReference type="SMR" id="Q0BNM8"/>
<dbReference type="KEGG" id="fth:FTH_0293"/>
<dbReference type="GO" id="GO:0005737">
    <property type="term" value="C:cytoplasm"/>
    <property type="evidence" value="ECO:0007669"/>
    <property type="project" value="UniProtKB-SubCell"/>
</dbReference>
<dbReference type="GO" id="GO:0051082">
    <property type="term" value="F:unfolded protein binding"/>
    <property type="evidence" value="ECO:0007669"/>
    <property type="project" value="InterPro"/>
</dbReference>
<dbReference type="GO" id="GO:0006457">
    <property type="term" value="P:protein folding"/>
    <property type="evidence" value="ECO:0007669"/>
    <property type="project" value="UniProtKB-UniRule"/>
</dbReference>
<dbReference type="GO" id="GO:0051262">
    <property type="term" value="P:protein tetramerization"/>
    <property type="evidence" value="ECO:0007669"/>
    <property type="project" value="InterPro"/>
</dbReference>
<dbReference type="GO" id="GO:0015031">
    <property type="term" value="P:protein transport"/>
    <property type="evidence" value="ECO:0007669"/>
    <property type="project" value="UniProtKB-UniRule"/>
</dbReference>
<dbReference type="Gene3D" id="3.10.420.10">
    <property type="entry name" value="SecB-like"/>
    <property type="match status" value="1"/>
</dbReference>
<dbReference type="HAMAP" id="MF_00821">
    <property type="entry name" value="SecB"/>
    <property type="match status" value="1"/>
</dbReference>
<dbReference type="InterPro" id="IPR003708">
    <property type="entry name" value="SecB"/>
</dbReference>
<dbReference type="InterPro" id="IPR035958">
    <property type="entry name" value="SecB-like_sf"/>
</dbReference>
<dbReference type="NCBIfam" id="NF004391">
    <property type="entry name" value="PRK05751.1-2"/>
    <property type="match status" value="1"/>
</dbReference>
<dbReference type="NCBIfam" id="TIGR00809">
    <property type="entry name" value="secB"/>
    <property type="match status" value="1"/>
</dbReference>
<dbReference type="PANTHER" id="PTHR36918">
    <property type="match status" value="1"/>
</dbReference>
<dbReference type="PANTHER" id="PTHR36918:SF1">
    <property type="entry name" value="PROTEIN-EXPORT PROTEIN SECB"/>
    <property type="match status" value="1"/>
</dbReference>
<dbReference type="Pfam" id="PF02556">
    <property type="entry name" value="SecB"/>
    <property type="match status" value="1"/>
</dbReference>
<dbReference type="PRINTS" id="PR01594">
    <property type="entry name" value="SECBCHAPRONE"/>
</dbReference>
<dbReference type="SUPFAM" id="SSF54611">
    <property type="entry name" value="SecB-like"/>
    <property type="match status" value="1"/>
</dbReference>
<accession>Q0BNM8</accession>
<proteinExistence type="inferred from homology"/>
<sequence length="147" mass="16699">MQNNEIQPSFLIQKVYTKDVSFETINSPACFKEQWNPSSDFNIDINTTKINDENFELDLTITVTTKNNETNAYIAEVTQSGIFTITSMSEEQIDSVLNTYCANTLFPYAKRIIDSSIIKGGFLPLNLAPINFDAIYLQKKSSPKREH</sequence>